<feature type="chain" id="PRO_1000213370" description="3-isopropylmalate dehydratase small subunit">
    <location>
        <begin position="1"/>
        <end position="165"/>
    </location>
</feature>
<dbReference type="EC" id="4.2.1.33" evidence="1"/>
<dbReference type="EMBL" id="CP001399">
    <property type="protein sequence ID" value="ACP34441.1"/>
    <property type="molecule type" value="Genomic_DNA"/>
</dbReference>
<dbReference type="RefSeq" id="WP_010923875.1">
    <property type="nucleotide sequence ID" value="NC_012589.1"/>
</dbReference>
<dbReference type="SMR" id="C3MKR6"/>
<dbReference type="KEGG" id="sis:LS215_0288"/>
<dbReference type="HOGENOM" id="CLU_081378_1_1_2"/>
<dbReference type="OrthoDB" id="6505at2157"/>
<dbReference type="UniPathway" id="UPA00048">
    <property type="reaction ID" value="UER00071"/>
</dbReference>
<dbReference type="Proteomes" id="UP000001747">
    <property type="component" value="Chromosome"/>
</dbReference>
<dbReference type="GO" id="GO:0003861">
    <property type="term" value="F:3-isopropylmalate dehydratase activity"/>
    <property type="evidence" value="ECO:0007669"/>
    <property type="project" value="UniProtKB-UniRule"/>
</dbReference>
<dbReference type="GO" id="GO:0009098">
    <property type="term" value="P:L-leucine biosynthetic process"/>
    <property type="evidence" value="ECO:0007669"/>
    <property type="project" value="UniProtKB-UniRule"/>
</dbReference>
<dbReference type="CDD" id="cd01577">
    <property type="entry name" value="IPMI_Swivel"/>
    <property type="match status" value="1"/>
</dbReference>
<dbReference type="Gene3D" id="3.20.19.10">
    <property type="entry name" value="Aconitase, domain 4"/>
    <property type="match status" value="1"/>
</dbReference>
<dbReference type="HAMAP" id="MF_01032">
    <property type="entry name" value="LeuD_type2"/>
    <property type="match status" value="1"/>
</dbReference>
<dbReference type="InterPro" id="IPR015928">
    <property type="entry name" value="Aconitase/3IPM_dehydase_swvl"/>
</dbReference>
<dbReference type="InterPro" id="IPR000573">
    <property type="entry name" value="AconitaseA/IPMdHydase_ssu_swvl"/>
</dbReference>
<dbReference type="InterPro" id="IPR033940">
    <property type="entry name" value="IPMI_Swivel"/>
</dbReference>
<dbReference type="InterPro" id="IPR050075">
    <property type="entry name" value="LeuD"/>
</dbReference>
<dbReference type="InterPro" id="IPR011827">
    <property type="entry name" value="LeuD_type2/HacB/DmdB"/>
</dbReference>
<dbReference type="NCBIfam" id="TIGR02087">
    <property type="entry name" value="LEUD_arch"/>
    <property type="match status" value="1"/>
</dbReference>
<dbReference type="PANTHER" id="PTHR43345:SF2">
    <property type="entry name" value="3-ISOPROPYLMALATE DEHYDRATASE SMALL SUBUNIT 1"/>
    <property type="match status" value="1"/>
</dbReference>
<dbReference type="PANTHER" id="PTHR43345">
    <property type="entry name" value="3-ISOPROPYLMALATE DEHYDRATASE SMALL SUBUNIT 2-RELATED-RELATED"/>
    <property type="match status" value="1"/>
</dbReference>
<dbReference type="Pfam" id="PF00694">
    <property type="entry name" value="Aconitase_C"/>
    <property type="match status" value="1"/>
</dbReference>
<dbReference type="SUPFAM" id="SSF52016">
    <property type="entry name" value="LeuD/IlvD-like"/>
    <property type="match status" value="1"/>
</dbReference>
<evidence type="ECO:0000255" key="1">
    <source>
        <dbReference type="HAMAP-Rule" id="MF_01032"/>
    </source>
</evidence>
<proteinExistence type="inferred from homology"/>
<gene>
    <name evidence="1" type="primary">leuD</name>
    <name type="ordered locus">LS215_0288</name>
</gene>
<comment type="function">
    <text evidence="1">Catalyzes the isomerization between 2-isopropylmalate and 3-isopropylmalate, via the formation of 2-isopropylmaleate.</text>
</comment>
<comment type="catalytic activity">
    <reaction evidence="1">
        <text>(2R,3S)-3-isopropylmalate = (2S)-2-isopropylmalate</text>
        <dbReference type="Rhea" id="RHEA:32287"/>
        <dbReference type="ChEBI" id="CHEBI:1178"/>
        <dbReference type="ChEBI" id="CHEBI:35121"/>
        <dbReference type="EC" id="4.2.1.33"/>
    </reaction>
</comment>
<comment type="pathway">
    <text evidence="1">Amino-acid biosynthesis; L-leucine biosynthesis; L-leucine from 3-methyl-2-oxobutanoate: step 2/4.</text>
</comment>
<comment type="subunit">
    <text evidence="1">Heterodimer of LeuC and LeuD.</text>
</comment>
<comment type="similarity">
    <text evidence="1">Belongs to the LeuD family. LeuD type 2 subfamily.</text>
</comment>
<keyword id="KW-0028">Amino-acid biosynthesis</keyword>
<keyword id="KW-0100">Branched-chain amino acid biosynthesis</keyword>
<keyword id="KW-0432">Leucine biosynthesis</keyword>
<keyword id="KW-0456">Lyase</keyword>
<organism>
    <name type="scientific">Saccharolobus islandicus (strain L.S.2.15 / Lassen #1)</name>
    <name type="common">Sulfolobus islandicus</name>
    <dbReference type="NCBI Taxonomy" id="429572"/>
    <lineage>
        <taxon>Archaea</taxon>
        <taxon>Thermoproteota</taxon>
        <taxon>Thermoprotei</taxon>
        <taxon>Sulfolobales</taxon>
        <taxon>Sulfolobaceae</taxon>
        <taxon>Saccharolobus</taxon>
    </lineage>
</organism>
<reference key="1">
    <citation type="journal article" date="2009" name="Proc. Natl. Acad. Sci. U.S.A.">
        <title>Biogeography of the Sulfolobus islandicus pan-genome.</title>
        <authorList>
            <person name="Reno M.L."/>
            <person name="Held N.L."/>
            <person name="Fields C.J."/>
            <person name="Burke P.V."/>
            <person name="Whitaker R.J."/>
        </authorList>
    </citation>
    <scope>NUCLEOTIDE SEQUENCE [LARGE SCALE GENOMIC DNA]</scope>
    <source>
        <strain>L.S.2.15 / Lassen #1</strain>
    </source>
</reference>
<protein>
    <recommendedName>
        <fullName evidence="1">3-isopropylmalate dehydratase small subunit</fullName>
        <ecNumber evidence="1">4.2.1.33</ecNumber>
    </recommendedName>
    <alternativeName>
        <fullName evidence="1">Alpha-IPM isomerase</fullName>
        <shortName evidence="1">IPMI</shortName>
    </alternativeName>
    <alternativeName>
        <fullName evidence="1">Isopropylmalate isomerase</fullName>
    </alternativeName>
</protein>
<accession>C3MKR6</accession>
<sequence>MIIEGPVIKFGDKIDTDIIIPARYLKYTDPQYLAQHVMEPLDPEFYKKASKGVIIVAGKVFGMGSSREQAAIALKAAGVKAVVAESFARIFYRNAINNGLPVITLPNSTKEIDENSYVKIDVETGEILVGNKVLKGKGITGMALEILQAGGIMEYLKKMQTVNRN</sequence>
<name>LEUD_SACI2</name>